<organism>
    <name type="scientific">Mycobacterium bovis (strain ATCC BAA-935 / AF2122/97)</name>
    <dbReference type="NCBI Taxonomy" id="233413"/>
    <lineage>
        <taxon>Bacteria</taxon>
        <taxon>Bacillati</taxon>
        <taxon>Actinomycetota</taxon>
        <taxon>Actinomycetes</taxon>
        <taxon>Mycobacteriales</taxon>
        <taxon>Mycobacteriaceae</taxon>
        <taxon>Mycobacterium</taxon>
        <taxon>Mycobacterium tuberculosis complex</taxon>
    </lineage>
</organism>
<gene>
    <name evidence="1" type="primary">der</name>
    <name type="synonym">engA</name>
    <name type="ordered locus">BQ2027_MB1740</name>
</gene>
<proteinExistence type="inferred from homology"/>
<comment type="function">
    <text evidence="1">GTPase that plays an essential role in the late steps of ribosome biogenesis.</text>
</comment>
<comment type="subunit">
    <text evidence="1">Associates with the 50S ribosomal subunit.</text>
</comment>
<comment type="similarity">
    <text evidence="1">Belongs to the TRAFAC class TrmE-Era-EngA-EngB-Septin-like GTPase superfamily. EngA (Der) GTPase family.</text>
</comment>
<sequence length="463" mass="49958">MTQDGTWVDESDWQLDDSEIAESGAAPVVAVVGRPNVGKSTLVNRILGRREAVVQDIPGVTRDRVCYDALWTGRRFVVQDTGGWEPNAKGLQRLVAEQASVAMRTADAVILVVDAGVGATAADEAAARILLRSGKPVFLAANKVDSEKGESDAAALWSLGLGEPHAISAMHGRGVADLLDGVLAALPEVGESASASGGPRRVALVGKPNVGKSSLLNKLAGDQRSVVHEAAGTTVDPVDSLIELGGDVWRFVDTAGLRRKVGQASGHEFYASVRTHAAIDSAEVAIVLIDASQPLTEQDLRVISMVIEAGRALVLAYNKWDLVDEDRRELLQREIDRELVQVRWAQRVNISAKTGRAVHKLVPAMEDALASWDTRIATGPLNTWLTEVTAATPPPVRGGKQPRILFATQATARPPTFVLFTTGFLEAGYRRFLERRLRETFGFDGSPIRVNVRVREKRAGKRR</sequence>
<name>DER_MYCBO</name>
<protein>
    <recommendedName>
        <fullName evidence="1">GTPase Der</fullName>
    </recommendedName>
    <alternativeName>
        <fullName evidence="1">GTP-binding protein EngA</fullName>
    </alternativeName>
</protein>
<feature type="chain" id="PRO_0000179018" description="GTPase Der">
    <location>
        <begin position="1"/>
        <end position="463"/>
    </location>
</feature>
<feature type="domain" description="EngA-type G 1">
    <location>
        <begin position="27"/>
        <end position="190"/>
    </location>
</feature>
<feature type="domain" description="EngA-type G 2">
    <location>
        <begin position="200"/>
        <end position="373"/>
    </location>
</feature>
<feature type="domain" description="KH-like" evidence="1">
    <location>
        <begin position="374"/>
        <end position="456"/>
    </location>
</feature>
<feature type="binding site" evidence="1">
    <location>
        <begin position="33"/>
        <end position="40"/>
    </location>
    <ligand>
        <name>GTP</name>
        <dbReference type="ChEBI" id="CHEBI:37565"/>
        <label>1</label>
    </ligand>
</feature>
<feature type="binding site" evidence="1">
    <location>
        <begin position="80"/>
        <end position="84"/>
    </location>
    <ligand>
        <name>GTP</name>
        <dbReference type="ChEBI" id="CHEBI:37565"/>
        <label>1</label>
    </ligand>
</feature>
<feature type="binding site" evidence="1">
    <location>
        <begin position="142"/>
        <end position="145"/>
    </location>
    <ligand>
        <name>GTP</name>
        <dbReference type="ChEBI" id="CHEBI:37565"/>
        <label>1</label>
    </ligand>
</feature>
<feature type="binding site" evidence="1">
    <location>
        <begin position="206"/>
        <end position="213"/>
    </location>
    <ligand>
        <name>GTP</name>
        <dbReference type="ChEBI" id="CHEBI:37565"/>
        <label>2</label>
    </ligand>
</feature>
<feature type="binding site" evidence="1">
    <location>
        <begin position="253"/>
        <end position="257"/>
    </location>
    <ligand>
        <name>GTP</name>
        <dbReference type="ChEBI" id="CHEBI:37565"/>
        <label>2</label>
    </ligand>
</feature>
<feature type="binding site" evidence="1">
    <location>
        <begin position="318"/>
        <end position="321"/>
    </location>
    <ligand>
        <name>GTP</name>
        <dbReference type="ChEBI" id="CHEBI:37565"/>
        <label>2</label>
    </ligand>
</feature>
<dbReference type="EMBL" id="LT708304">
    <property type="protein sequence ID" value="SIU00344.1"/>
    <property type="molecule type" value="Genomic_DNA"/>
</dbReference>
<dbReference type="RefSeq" id="NP_855393.1">
    <property type="nucleotide sequence ID" value="NC_002945.3"/>
</dbReference>
<dbReference type="RefSeq" id="WP_003898984.1">
    <property type="nucleotide sequence ID" value="NC_002945.4"/>
</dbReference>
<dbReference type="SMR" id="P64058"/>
<dbReference type="GeneID" id="45425684"/>
<dbReference type="KEGG" id="mbo:BQ2027_MB1740"/>
<dbReference type="PATRIC" id="fig|233413.5.peg.1898"/>
<dbReference type="Proteomes" id="UP000001419">
    <property type="component" value="Chromosome"/>
</dbReference>
<dbReference type="GO" id="GO:0016887">
    <property type="term" value="F:ATP hydrolysis activity"/>
    <property type="evidence" value="ECO:0007669"/>
    <property type="project" value="InterPro"/>
</dbReference>
<dbReference type="GO" id="GO:0005525">
    <property type="term" value="F:GTP binding"/>
    <property type="evidence" value="ECO:0007669"/>
    <property type="project" value="UniProtKB-UniRule"/>
</dbReference>
<dbReference type="GO" id="GO:0043022">
    <property type="term" value="F:ribosome binding"/>
    <property type="evidence" value="ECO:0007669"/>
    <property type="project" value="TreeGrafter"/>
</dbReference>
<dbReference type="GO" id="GO:0042254">
    <property type="term" value="P:ribosome biogenesis"/>
    <property type="evidence" value="ECO:0007669"/>
    <property type="project" value="UniProtKB-KW"/>
</dbReference>
<dbReference type="CDD" id="cd01894">
    <property type="entry name" value="EngA1"/>
    <property type="match status" value="1"/>
</dbReference>
<dbReference type="CDD" id="cd01895">
    <property type="entry name" value="EngA2"/>
    <property type="match status" value="1"/>
</dbReference>
<dbReference type="FunFam" id="3.30.300.20:FF:000004">
    <property type="entry name" value="GTPase Der"/>
    <property type="match status" value="1"/>
</dbReference>
<dbReference type="FunFam" id="3.40.50.300:FF:000040">
    <property type="entry name" value="GTPase Der"/>
    <property type="match status" value="1"/>
</dbReference>
<dbReference type="FunFam" id="3.40.50.300:FF:000057">
    <property type="entry name" value="GTPase Der"/>
    <property type="match status" value="1"/>
</dbReference>
<dbReference type="Gene3D" id="3.30.300.20">
    <property type="match status" value="1"/>
</dbReference>
<dbReference type="Gene3D" id="3.40.50.300">
    <property type="entry name" value="P-loop containing nucleotide triphosphate hydrolases"/>
    <property type="match status" value="2"/>
</dbReference>
<dbReference type="HAMAP" id="MF_00195">
    <property type="entry name" value="GTPase_Der"/>
    <property type="match status" value="1"/>
</dbReference>
<dbReference type="InterPro" id="IPR003593">
    <property type="entry name" value="AAA+_ATPase"/>
</dbReference>
<dbReference type="InterPro" id="IPR031166">
    <property type="entry name" value="G_ENGA"/>
</dbReference>
<dbReference type="InterPro" id="IPR006073">
    <property type="entry name" value="GTP-bd"/>
</dbReference>
<dbReference type="InterPro" id="IPR016484">
    <property type="entry name" value="GTPase_Der"/>
</dbReference>
<dbReference type="InterPro" id="IPR032859">
    <property type="entry name" value="KH_dom-like"/>
</dbReference>
<dbReference type="InterPro" id="IPR015946">
    <property type="entry name" value="KH_dom-like_a/b"/>
</dbReference>
<dbReference type="InterPro" id="IPR027417">
    <property type="entry name" value="P-loop_NTPase"/>
</dbReference>
<dbReference type="InterPro" id="IPR005225">
    <property type="entry name" value="Small_GTP-bd"/>
</dbReference>
<dbReference type="NCBIfam" id="TIGR03594">
    <property type="entry name" value="GTPase_EngA"/>
    <property type="match status" value="1"/>
</dbReference>
<dbReference type="NCBIfam" id="NF002828">
    <property type="entry name" value="PRK03003.1"/>
    <property type="match status" value="1"/>
</dbReference>
<dbReference type="NCBIfam" id="TIGR00231">
    <property type="entry name" value="small_GTP"/>
    <property type="match status" value="2"/>
</dbReference>
<dbReference type="PANTHER" id="PTHR43834">
    <property type="entry name" value="GTPASE DER"/>
    <property type="match status" value="1"/>
</dbReference>
<dbReference type="PANTHER" id="PTHR43834:SF6">
    <property type="entry name" value="GTPASE DER"/>
    <property type="match status" value="1"/>
</dbReference>
<dbReference type="Pfam" id="PF14714">
    <property type="entry name" value="KH_dom-like"/>
    <property type="match status" value="1"/>
</dbReference>
<dbReference type="Pfam" id="PF01926">
    <property type="entry name" value="MMR_HSR1"/>
    <property type="match status" value="2"/>
</dbReference>
<dbReference type="PIRSF" id="PIRSF006485">
    <property type="entry name" value="GTP-binding_EngA"/>
    <property type="match status" value="1"/>
</dbReference>
<dbReference type="PRINTS" id="PR00326">
    <property type="entry name" value="GTP1OBG"/>
</dbReference>
<dbReference type="SMART" id="SM00382">
    <property type="entry name" value="AAA"/>
    <property type="match status" value="2"/>
</dbReference>
<dbReference type="SUPFAM" id="SSF52540">
    <property type="entry name" value="P-loop containing nucleoside triphosphate hydrolases"/>
    <property type="match status" value="2"/>
</dbReference>
<dbReference type="PROSITE" id="PS51712">
    <property type="entry name" value="G_ENGA"/>
    <property type="match status" value="2"/>
</dbReference>
<reference key="1">
    <citation type="journal article" date="2003" name="Proc. Natl. Acad. Sci. U.S.A.">
        <title>The complete genome sequence of Mycobacterium bovis.</title>
        <authorList>
            <person name="Garnier T."/>
            <person name="Eiglmeier K."/>
            <person name="Camus J.-C."/>
            <person name="Medina N."/>
            <person name="Mansoor H."/>
            <person name="Pryor M."/>
            <person name="Duthoy S."/>
            <person name="Grondin S."/>
            <person name="Lacroix C."/>
            <person name="Monsempe C."/>
            <person name="Simon S."/>
            <person name="Harris B."/>
            <person name="Atkin R."/>
            <person name="Doggett J."/>
            <person name="Mayes R."/>
            <person name="Keating L."/>
            <person name="Wheeler P.R."/>
            <person name="Parkhill J."/>
            <person name="Barrell B.G."/>
            <person name="Cole S.T."/>
            <person name="Gordon S.V."/>
            <person name="Hewinson R.G."/>
        </authorList>
    </citation>
    <scope>NUCLEOTIDE SEQUENCE [LARGE SCALE GENOMIC DNA]</scope>
    <source>
        <strain>ATCC BAA-935 / AF2122/97</strain>
    </source>
</reference>
<reference key="2">
    <citation type="journal article" date="2017" name="Genome Announc.">
        <title>Updated reference genome sequence and annotation of Mycobacterium bovis AF2122/97.</title>
        <authorList>
            <person name="Malone K.M."/>
            <person name="Farrell D."/>
            <person name="Stuber T.P."/>
            <person name="Schubert O.T."/>
            <person name="Aebersold R."/>
            <person name="Robbe-Austerman S."/>
            <person name="Gordon S.V."/>
        </authorList>
    </citation>
    <scope>NUCLEOTIDE SEQUENCE [LARGE SCALE GENOMIC DNA]</scope>
    <scope>GENOME REANNOTATION</scope>
    <source>
        <strain>ATCC BAA-935 / AF2122/97</strain>
    </source>
</reference>
<accession>P64058</accession>
<accession>A0A1R3XZY0</accession>
<accession>O33212</accession>
<accession>X2BIL4</accession>
<keyword id="KW-0342">GTP-binding</keyword>
<keyword id="KW-0547">Nucleotide-binding</keyword>
<keyword id="KW-1185">Reference proteome</keyword>
<keyword id="KW-0677">Repeat</keyword>
<keyword id="KW-0690">Ribosome biogenesis</keyword>
<evidence type="ECO:0000255" key="1">
    <source>
        <dbReference type="HAMAP-Rule" id="MF_00195"/>
    </source>
</evidence>